<dbReference type="EC" id="2.3.1.31" evidence="1"/>
<dbReference type="EMBL" id="CP001340">
    <property type="protein sequence ID" value="ACL94024.1"/>
    <property type="molecule type" value="Genomic_DNA"/>
</dbReference>
<dbReference type="SMR" id="B8GZZ0"/>
<dbReference type="ESTHER" id="caucr-CC0525">
    <property type="family name" value="Homoserine_transacetylase"/>
</dbReference>
<dbReference type="KEGG" id="ccs:CCNA_00559"/>
<dbReference type="PATRIC" id="fig|565050.3.peg.552"/>
<dbReference type="HOGENOM" id="CLU_028760_1_2_5"/>
<dbReference type="OrthoDB" id="9800754at2"/>
<dbReference type="PhylomeDB" id="B8GZZ0"/>
<dbReference type="UniPathway" id="UPA00051">
    <property type="reaction ID" value="UER00074"/>
</dbReference>
<dbReference type="Proteomes" id="UP000001364">
    <property type="component" value="Chromosome"/>
</dbReference>
<dbReference type="GO" id="GO:0005737">
    <property type="term" value="C:cytoplasm"/>
    <property type="evidence" value="ECO:0007669"/>
    <property type="project" value="UniProtKB-SubCell"/>
</dbReference>
<dbReference type="GO" id="GO:0004414">
    <property type="term" value="F:homoserine O-acetyltransferase activity"/>
    <property type="evidence" value="ECO:0007669"/>
    <property type="project" value="UniProtKB-UniRule"/>
</dbReference>
<dbReference type="GO" id="GO:0009092">
    <property type="term" value="P:homoserine metabolic process"/>
    <property type="evidence" value="ECO:0007669"/>
    <property type="project" value="TreeGrafter"/>
</dbReference>
<dbReference type="GO" id="GO:0009086">
    <property type="term" value="P:methionine biosynthetic process"/>
    <property type="evidence" value="ECO:0007669"/>
    <property type="project" value="UniProtKB-UniRule"/>
</dbReference>
<dbReference type="FunFam" id="1.10.1740.110:FF:000001">
    <property type="entry name" value="Homoserine O-acetyltransferase"/>
    <property type="match status" value="1"/>
</dbReference>
<dbReference type="Gene3D" id="1.10.1740.110">
    <property type="match status" value="1"/>
</dbReference>
<dbReference type="Gene3D" id="3.40.50.1820">
    <property type="entry name" value="alpha/beta hydrolase"/>
    <property type="match status" value="1"/>
</dbReference>
<dbReference type="HAMAP" id="MF_00296">
    <property type="entry name" value="MetX_acyltransf"/>
    <property type="match status" value="1"/>
</dbReference>
<dbReference type="InterPro" id="IPR000073">
    <property type="entry name" value="AB_hydrolase_1"/>
</dbReference>
<dbReference type="InterPro" id="IPR029058">
    <property type="entry name" value="AB_hydrolase_fold"/>
</dbReference>
<dbReference type="InterPro" id="IPR008220">
    <property type="entry name" value="HAT_MetX-like"/>
</dbReference>
<dbReference type="NCBIfam" id="TIGR01392">
    <property type="entry name" value="homoserO_Ac_trn"/>
    <property type="match status" value="1"/>
</dbReference>
<dbReference type="NCBIfam" id="NF001209">
    <property type="entry name" value="PRK00175.1"/>
    <property type="match status" value="1"/>
</dbReference>
<dbReference type="PANTHER" id="PTHR32268">
    <property type="entry name" value="HOMOSERINE O-ACETYLTRANSFERASE"/>
    <property type="match status" value="1"/>
</dbReference>
<dbReference type="PANTHER" id="PTHR32268:SF11">
    <property type="entry name" value="HOMOSERINE O-ACETYLTRANSFERASE"/>
    <property type="match status" value="1"/>
</dbReference>
<dbReference type="Pfam" id="PF00561">
    <property type="entry name" value="Abhydrolase_1"/>
    <property type="match status" value="1"/>
</dbReference>
<dbReference type="PIRSF" id="PIRSF000443">
    <property type="entry name" value="Homoser_Ac_trans"/>
    <property type="match status" value="1"/>
</dbReference>
<dbReference type="SUPFAM" id="SSF53474">
    <property type="entry name" value="alpha/beta-Hydrolases"/>
    <property type="match status" value="1"/>
</dbReference>
<comment type="function">
    <text evidence="1">Transfers an acetyl group from acetyl-CoA to L-homoserine, forming acetyl-L-homoserine.</text>
</comment>
<comment type="catalytic activity">
    <reaction evidence="1">
        <text>L-homoserine + acetyl-CoA = O-acetyl-L-homoserine + CoA</text>
        <dbReference type="Rhea" id="RHEA:13701"/>
        <dbReference type="ChEBI" id="CHEBI:57287"/>
        <dbReference type="ChEBI" id="CHEBI:57288"/>
        <dbReference type="ChEBI" id="CHEBI:57476"/>
        <dbReference type="ChEBI" id="CHEBI:57716"/>
        <dbReference type="EC" id="2.3.1.31"/>
    </reaction>
</comment>
<comment type="pathway">
    <text evidence="1">Amino-acid biosynthesis; L-methionine biosynthesis via de novo pathway; O-acetyl-L-homoserine from L-homoserine: step 1/1.</text>
</comment>
<comment type="subunit">
    <text evidence="1">Homodimer.</text>
</comment>
<comment type="subcellular location">
    <subcellularLocation>
        <location evidence="1">Cytoplasm</location>
    </subcellularLocation>
</comment>
<comment type="similarity">
    <text evidence="1">Belongs to the AB hydrolase superfamily. MetX family.</text>
</comment>
<keyword id="KW-0012">Acyltransferase</keyword>
<keyword id="KW-0028">Amino-acid biosynthesis</keyword>
<keyword id="KW-0963">Cytoplasm</keyword>
<keyword id="KW-0486">Methionine biosynthesis</keyword>
<keyword id="KW-1185">Reference proteome</keyword>
<keyword id="KW-0808">Transferase</keyword>
<protein>
    <recommendedName>
        <fullName evidence="1">Homoserine O-acetyltransferase</fullName>
        <shortName evidence="1">HAT</shortName>
        <ecNumber evidence="1">2.3.1.31</ecNumber>
    </recommendedName>
    <alternativeName>
        <fullName evidence="1">Homoserine transacetylase</fullName>
        <shortName evidence="1">HTA</shortName>
    </alternativeName>
</protein>
<organism>
    <name type="scientific">Caulobacter vibrioides (strain NA1000 / CB15N)</name>
    <name type="common">Caulobacter crescentus</name>
    <dbReference type="NCBI Taxonomy" id="565050"/>
    <lineage>
        <taxon>Bacteria</taxon>
        <taxon>Pseudomonadati</taxon>
        <taxon>Pseudomonadota</taxon>
        <taxon>Alphaproteobacteria</taxon>
        <taxon>Caulobacterales</taxon>
        <taxon>Caulobacteraceae</taxon>
        <taxon>Caulobacter</taxon>
    </lineage>
</organism>
<proteinExistence type="inferred from homology"/>
<feature type="chain" id="PRO_1000132719" description="Homoserine O-acetyltransferase">
    <location>
        <begin position="1"/>
        <end position="382"/>
    </location>
</feature>
<feature type="domain" description="AB hydrolase-1" evidence="1">
    <location>
        <begin position="50"/>
        <end position="360"/>
    </location>
</feature>
<feature type="active site" description="Nucleophile" evidence="1">
    <location>
        <position position="155"/>
    </location>
</feature>
<feature type="active site" evidence="1">
    <location>
        <position position="321"/>
    </location>
</feature>
<feature type="active site" evidence="1">
    <location>
        <position position="354"/>
    </location>
</feature>
<feature type="binding site" evidence="1">
    <location>
        <position position="225"/>
    </location>
    <ligand>
        <name>substrate</name>
    </ligand>
</feature>
<feature type="binding site" evidence="1">
    <location>
        <position position="355"/>
    </location>
    <ligand>
        <name>substrate</name>
    </ligand>
</feature>
<gene>
    <name evidence="1" type="primary">metXA</name>
    <name type="ordered locus">CCNA_00559</name>
</gene>
<evidence type="ECO:0000255" key="1">
    <source>
        <dbReference type="HAMAP-Rule" id="MF_00296"/>
    </source>
</evidence>
<name>METXA_CAUVN</name>
<accession>B8GZZ0</accession>
<reference key="1">
    <citation type="journal article" date="2010" name="J. Bacteriol.">
        <title>The genetic basis of laboratory adaptation in Caulobacter crescentus.</title>
        <authorList>
            <person name="Marks M.E."/>
            <person name="Castro-Rojas C.M."/>
            <person name="Teiling C."/>
            <person name="Du L."/>
            <person name="Kapatral V."/>
            <person name="Walunas T.L."/>
            <person name="Crosson S."/>
        </authorList>
    </citation>
    <scope>NUCLEOTIDE SEQUENCE [LARGE SCALE GENOMIC DNA]</scope>
    <source>
        <strain>NA1000 / CB15N</strain>
    </source>
</reference>
<sequence length="382" mass="41216">MAALDPITPAGGGTWRFPANEPLRLDSGGVIEGLEIAYQTYGQLNADKSNAVLICHALTGDQHVASPHPTTGKPGWWQRLVGPGKPLDPARHFIICSNVIGGCMGSTGPASINPATGKTYGLSFPVITIADMVRAQAMLVSALGVETLFAVVGGSMGGMQVQQWAVDYPERMFSAVVLASASRHSAQNIAFHEVGRQAIMADPDWRGGAYAEHGVRPEKGLAVARMAAHITYLSEPALQRKFGRELQRDGLSWGFDADFQVESYLRHQGSSFVDRFDANSYLYITRAMDYFDIAASHGGVLAKAFTRARNVRFCVLSFSSDWLYPTAENRHLVRALTAAGARAAFAEIESDKGHDAFLLDEPVMDAALEGFLASAERDRGLV</sequence>